<feature type="chain" id="PRO_0000415296" description="HTH-type transcriptional repressor NanR">
    <location>
        <begin position="1"/>
        <end position="260"/>
    </location>
</feature>
<feature type="domain" description="HTH gntR-type" evidence="1">
    <location>
        <begin position="27"/>
        <end position="95"/>
    </location>
</feature>
<feature type="DNA-binding region" description="H-T-H motif" evidence="1">
    <location>
        <begin position="55"/>
        <end position="74"/>
    </location>
</feature>
<reference key="1">
    <citation type="journal article" date="2010" name="J. Bacteriol.">
        <title>The Citrobacter rodentium genome sequence reveals convergent evolution with human pathogenic Escherichia coli.</title>
        <authorList>
            <person name="Petty N.K."/>
            <person name="Bulgin R."/>
            <person name="Crepin V.F."/>
            <person name="Cerdeno-Tarraga A.M."/>
            <person name="Schroeder G.N."/>
            <person name="Quail M.A."/>
            <person name="Lennard N."/>
            <person name="Corton C."/>
            <person name="Barron A."/>
            <person name="Clark L."/>
            <person name="Toribio A.L."/>
            <person name="Parkhill J."/>
            <person name="Dougan G."/>
            <person name="Frankel G."/>
            <person name="Thomson N.R."/>
        </authorList>
    </citation>
    <scope>NUCLEOTIDE SEQUENCE [LARGE SCALE GENOMIC DNA]</scope>
    <source>
        <strain>ICC168</strain>
    </source>
</reference>
<accession>D2TP58</accession>
<organism>
    <name type="scientific">Citrobacter rodentium (strain ICC168)</name>
    <name type="common">Citrobacter freundii biotype 4280</name>
    <dbReference type="NCBI Taxonomy" id="637910"/>
    <lineage>
        <taxon>Bacteria</taxon>
        <taxon>Pseudomonadati</taxon>
        <taxon>Pseudomonadota</taxon>
        <taxon>Gammaproteobacteria</taxon>
        <taxon>Enterobacterales</taxon>
        <taxon>Enterobacteriaceae</taxon>
        <taxon>Citrobacter</taxon>
    </lineage>
</organism>
<protein>
    <recommendedName>
        <fullName evidence="1">HTH-type transcriptional repressor NanR</fullName>
    </recommendedName>
</protein>
<comment type="function">
    <text evidence="1">Transcriptional repressor that controls expression of the genes required for the catabolism of sialic acids.</text>
</comment>
<comment type="similarity">
    <text evidence="1">Belongs to the NanR family.</text>
</comment>
<sequence length="260" mass="29212">MKTFDSQAENSPAVIGRSLRNRPLARKKLSEMVEEELEQMIRRKEFGEGEQLPSERELMAFFNVGRPSVREALAALKRKGLVQINNGERARVSRPSADTIIGELSGMAKDFLAHPGGIAHFEQLRLFFESSLVRYAAENATDAQIDLLAKALEINSQSLDDNALFIRSDVDFHRVLAEIPGNPIFKAIHVALLDWLIAARPTVPDRELYEHNSVSYQQHIAIVDAIRQRDPDAADRALQTHLNSVSATWHALGQQSKRKK</sequence>
<name>NANR_CITRI</name>
<proteinExistence type="inferred from homology"/>
<dbReference type="EMBL" id="FN543502">
    <property type="protein sequence ID" value="CBG91291.1"/>
    <property type="molecule type" value="Genomic_DNA"/>
</dbReference>
<dbReference type="RefSeq" id="WP_012908490.1">
    <property type="nucleotide sequence ID" value="NC_013716.1"/>
</dbReference>
<dbReference type="SMR" id="D2TP58"/>
<dbReference type="STRING" id="637910.ROD_45961"/>
<dbReference type="KEGG" id="cro:ROD_45961"/>
<dbReference type="eggNOG" id="COG2186">
    <property type="taxonomic scope" value="Bacteria"/>
</dbReference>
<dbReference type="HOGENOM" id="CLU_017584_9_1_6"/>
<dbReference type="OrthoDB" id="7005926at2"/>
<dbReference type="Proteomes" id="UP000001889">
    <property type="component" value="Chromosome"/>
</dbReference>
<dbReference type="GO" id="GO:0003677">
    <property type="term" value="F:DNA binding"/>
    <property type="evidence" value="ECO:0007669"/>
    <property type="project" value="UniProtKB-KW"/>
</dbReference>
<dbReference type="GO" id="GO:0003700">
    <property type="term" value="F:DNA-binding transcription factor activity"/>
    <property type="evidence" value="ECO:0007669"/>
    <property type="project" value="UniProtKB-UniRule"/>
</dbReference>
<dbReference type="GO" id="GO:0045892">
    <property type="term" value="P:negative regulation of DNA-templated transcription"/>
    <property type="evidence" value="ECO:0007669"/>
    <property type="project" value="UniProtKB-UniRule"/>
</dbReference>
<dbReference type="CDD" id="cd07377">
    <property type="entry name" value="WHTH_GntR"/>
    <property type="match status" value="1"/>
</dbReference>
<dbReference type="FunFam" id="1.10.10.10:FF:000150">
    <property type="entry name" value="HTH-type transcriptional repressor NanR"/>
    <property type="match status" value="1"/>
</dbReference>
<dbReference type="Gene3D" id="1.20.120.530">
    <property type="entry name" value="GntR ligand-binding domain-like"/>
    <property type="match status" value="1"/>
</dbReference>
<dbReference type="Gene3D" id="1.10.10.10">
    <property type="entry name" value="Winged helix-like DNA-binding domain superfamily/Winged helix DNA-binding domain"/>
    <property type="match status" value="1"/>
</dbReference>
<dbReference type="HAMAP" id="MF_01236">
    <property type="entry name" value="HTH_NanR"/>
    <property type="match status" value="1"/>
</dbReference>
<dbReference type="InterPro" id="IPR011711">
    <property type="entry name" value="GntR_C"/>
</dbReference>
<dbReference type="InterPro" id="IPR008920">
    <property type="entry name" value="TF_FadR/GntR_C"/>
</dbReference>
<dbReference type="InterPro" id="IPR000524">
    <property type="entry name" value="Tscrpt_reg_HTH_GntR"/>
</dbReference>
<dbReference type="InterPro" id="IPR023730">
    <property type="entry name" value="Tscrpt_reg_NanR"/>
</dbReference>
<dbReference type="InterPro" id="IPR036388">
    <property type="entry name" value="WH-like_DNA-bd_sf"/>
</dbReference>
<dbReference type="InterPro" id="IPR036390">
    <property type="entry name" value="WH_DNA-bd_sf"/>
</dbReference>
<dbReference type="NCBIfam" id="NF003011">
    <property type="entry name" value="PRK03837.1"/>
    <property type="match status" value="1"/>
</dbReference>
<dbReference type="PANTHER" id="PTHR43537:SF53">
    <property type="entry name" value="HTH-TYPE TRANSCRIPTIONAL REPRESSOR NANR"/>
    <property type="match status" value="1"/>
</dbReference>
<dbReference type="PANTHER" id="PTHR43537">
    <property type="entry name" value="TRANSCRIPTIONAL REGULATOR, GNTR FAMILY"/>
    <property type="match status" value="1"/>
</dbReference>
<dbReference type="Pfam" id="PF07729">
    <property type="entry name" value="FCD"/>
    <property type="match status" value="1"/>
</dbReference>
<dbReference type="Pfam" id="PF00392">
    <property type="entry name" value="GntR"/>
    <property type="match status" value="1"/>
</dbReference>
<dbReference type="PRINTS" id="PR00035">
    <property type="entry name" value="HTHGNTR"/>
</dbReference>
<dbReference type="SMART" id="SM00895">
    <property type="entry name" value="FCD"/>
    <property type="match status" value="1"/>
</dbReference>
<dbReference type="SMART" id="SM00345">
    <property type="entry name" value="HTH_GNTR"/>
    <property type="match status" value="1"/>
</dbReference>
<dbReference type="SUPFAM" id="SSF48008">
    <property type="entry name" value="GntR ligand-binding domain-like"/>
    <property type="match status" value="1"/>
</dbReference>
<dbReference type="SUPFAM" id="SSF46785">
    <property type="entry name" value="Winged helix' DNA-binding domain"/>
    <property type="match status" value="1"/>
</dbReference>
<dbReference type="PROSITE" id="PS50949">
    <property type="entry name" value="HTH_GNTR"/>
    <property type="match status" value="1"/>
</dbReference>
<keyword id="KW-0238">DNA-binding</keyword>
<keyword id="KW-1185">Reference proteome</keyword>
<keyword id="KW-0678">Repressor</keyword>
<keyword id="KW-0804">Transcription</keyword>
<keyword id="KW-0805">Transcription regulation</keyword>
<evidence type="ECO:0000255" key="1">
    <source>
        <dbReference type="HAMAP-Rule" id="MF_01236"/>
    </source>
</evidence>
<gene>
    <name evidence="1" type="primary">nanR</name>
    <name type="ordered locus">ROD_45961</name>
</gene>